<evidence type="ECO:0000255" key="1">
    <source>
        <dbReference type="HAMAP-Rule" id="MF_01859"/>
    </source>
</evidence>
<evidence type="ECO:0000305" key="2"/>
<sequence length="376" mass="42051">MKTELTLLEQTLTLHRFPKRNNETLQAWDAGDEYLIQHVEQLALPESSHIVIINDHFGTLSCWFSQKHKVSMMSDSYIAHQATQANLQQNQRPPVQLLTTLDPVPNDASVVLLQLPKSNRHLVWILSQLRKALSPNIPIIAVNKAKEIHTSTLNLFEKHLGPTTTSLAWKKHRLVFSSATVNPANEVNPECGWSIEPYAITLTNLPNVYSGESLDLGSRFILEHLPADPTLEDFIDLGCGNGVLSVRLGQLNPQAKITCVDESFMAIASAQKNLHDNLGKRDIHCIANNCLDGFPAHSSSMIVCNPPFHQQQTITDHIAWQMFCDSKHVLKKGGKLWVIGNRHLGYDVKLARLFGKSHVRVIANNSKFVILQAIKS</sequence>
<feature type="chain" id="PRO_0000366531" description="Ribosomal RNA large subunit methyltransferase G">
    <location>
        <begin position="1"/>
        <end position="376"/>
    </location>
</feature>
<proteinExistence type="inferred from homology"/>
<accession>A5F5X3</accession>
<accession>C3M421</accession>
<dbReference type="EC" id="2.1.1.174" evidence="1"/>
<dbReference type="EMBL" id="CP000627">
    <property type="protein sequence ID" value="ABQ21539.1"/>
    <property type="status" value="ALT_INIT"/>
    <property type="molecule type" value="Genomic_DNA"/>
</dbReference>
<dbReference type="EMBL" id="CP001235">
    <property type="protein sequence ID" value="ACP10403.1"/>
    <property type="status" value="ALT_INIT"/>
    <property type="molecule type" value="Genomic_DNA"/>
</dbReference>
<dbReference type="RefSeq" id="WP_000845886.1">
    <property type="nucleotide sequence ID" value="NZ_JAACZH010000008.1"/>
</dbReference>
<dbReference type="SMR" id="A5F5X3"/>
<dbReference type="KEGG" id="vco:VC0395_A1886"/>
<dbReference type="KEGG" id="vcr:VC395_2413"/>
<dbReference type="PATRIC" id="fig|345073.21.peg.2326"/>
<dbReference type="eggNOG" id="COG2813">
    <property type="taxonomic scope" value="Bacteria"/>
</dbReference>
<dbReference type="HOGENOM" id="CLU_040288_4_0_6"/>
<dbReference type="OrthoDB" id="29650at2"/>
<dbReference type="Proteomes" id="UP000000249">
    <property type="component" value="Chromosome 2"/>
</dbReference>
<dbReference type="GO" id="GO:0005737">
    <property type="term" value="C:cytoplasm"/>
    <property type="evidence" value="ECO:0007669"/>
    <property type="project" value="UniProtKB-SubCell"/>
</dbReference>
<dbReference type="GO" id="GO:0052916">
    <property type="term" value="F:23S rRNA (guanine(1835)-N(2))-methyltransferase activity"/>
    <property type="evidence" value="ECO:0007669"/>
    <property type="project" value="UniProtKB-EC"/>
</dbReference>
<dbReference type="GO" id="GO:0003676">
    <property type="term" value="F:nucleic acid binding"/>
    <property type="evidence" value="ECO:0007669"/>
    <property type="project" value="InterPro"/>
</dbReference>
<dbReference type="CDD" id="cd02440">
    <property type="entry name" value="AdoMet_MTases"/>
    <property type="match status" value="1"/>
</dbReference>
<dbReference type="Gene3D" id="3.40.50.150">
    <property type="entry name" value="Vaccinia Virus protein VP39"/>
    <property type="match status" value="2"/>
</dbReference>
<dbReference type="HAMAP" id="MF_01859">
    <property type="entry name" value="23SrRNA_methyltr_G"/>
    <property type="match status" value="1"/>
</dbReference>
<dbReference type="InterPro" id="IPR002052">
    <property type="entry name" value="DNA_methylase_N6_adenine_CS"/>
</dbReference>
<dbReference type="InterPro" id="IPR017237">
    <property type="entry name" value="rRNA_m2G-MeTrfase_RlmG"/>
</dbReference>
<dbReference type="InterPro" id="IPR046977">
    <property type="entry name" value="RsmC/RlmG"/>
</dbReference>
<dbReference type="InterPro" id="IPR029063">
    <property type="entry name" value="SAM-dependent_MTases_sf"/>
</dbReference>
<dbReference type="InterPro" id="IPR007848">
    <property type="entry name" value="Small_mtfrase_dom"/>
</dbReference>
<dbReference type="PANTHER" id="PTHR47816:SF5">
    <property type="entry name" value="RIBOSOMAL RNA LARGE SUBUNIT METHYLTRANSFERASE G"/>
    <property type="match status" value="1"/>
</dbReference>
<dbReference type="PANTHER" id="PTHR47816">
    <property type="entry name" value="RIBOSOMAL RNA SMALL SUBUNIT METHYLTRANSFERASE C"/>
    <property type="match status" value="1"/>
</dbReference>
<dbReference type="Pfam" id="PF05175">
    <property type="entry name" value="MTS"/>
    <property type="match status" value="1"/>
</dbReference>
<dbReference type="PIRSF" id="PIRSF037565">
    <property type="entry name" value="RRNA_m2G_Mtase_RsmD_prd"/>
    <property type="match status" value="1"/>
</dbReference>
<dbReference type="SUPFAM" id="SSF53335">
    <property type="entry name" value="S-adenosyl-L-methionine-dependent methyltransferases"/>
    <property type="match status" value="1"/>
</dbReference>
<protein>
    <recommendedName>
        <fullName evidence="1">Ribosomal RNA large subunit methyltransferase G</fullName>
        <ecNumber evidence="1">2.1.1.174</ecNumber>
    </recommendedName>
    <alternativeName>
        <fullName evidence="1">23S rRNA m2G1835 methyltransferase</fullName>
    </alternativeName>
    <alternativeName>
        <fullName evidence="1">rRNA (guanine-N(2)-)-methyltransferase RlmG</fullName>
    </alternativeName>
</protein>
<organism>
    <name type="scientific">Vibrio cholerae serotype O1 (strain ATCC 39541 / Classical Ogawa 395 / O395)</name>
    <dbReference type="NCBI Taxonomy" id="345073"/>
    <lineage>
        <taxon>Bacteria</taxon>
        <taxon>Pseudomonadati</taxon>
        <taxon>Pseudomonadota</taxon>
        <taxon>Gammaproteobacteria</taxon>
        <taxon>Vibrionales</taxon>
        <taxon>Vibrionaceae</taxon>
        <taxon>Vibrio</taxon>
    </lineage>
</organism>
<name>RLMG_VIBC3</name>
<gene>
    <name evidence="1" type="primary">rlmG</name>
    <name type="ordered locus">VC0395_A1886</name>
    <name type="ordered locus">VC395_2413</name>
</gene>
<comment type="function">
    <text evidence="1">Specifically methylates the guanine in position 1835 (m2G1835) of 23S rRNA.</text>
</comment>
<comment type="catalytic activity">
    <reaction evidence="1">
        <text>guanosine(1835) in 23S rRNA + S-adenosyl-L-methionine = N(2)-methylguanosine(1835) in 23S rRNA + S-adenosyl-L-homocysteine + H(+)</text>
        <dbReference type="Rhea" id="RHEA:42744"/>
        <dbReference type="Rhea" id="RHEA-COMP:10217"/>
        <dbReference type="Rhea" id="RHEA-COMP:10218"/>
        <dbReference type="ChEBI" id="CHEBI:15378"/>
        <dbReference type="ChEBI" id="CHEBI:57856"/>
        <dbReference type="ChEBI" id="CHEBI:59789"/>
        <dbReference type="ChEBI" id="CHEBI:74269"/>
        <dbReference type="ChEBI" id="CHEBI:74481"/>
        <dbReference type="EC" id="2.1.1.174"/>
    </reaction>
</comment>
<comment type="subcellular location">
    <subcellularLocation>
        <location evidence="1">Cytoplasm</location>
    </subcellularLocation>
</comment>
<comment type="similarity">
    <text evidence="1">Belongs to the methyltransferase superfamily. RlmG family.</text>
</comment>
<comment type="sequence caution" evidence="2">
    <conflict type="erroneous initiation">
        <sequence resource="EMBL-CDS" id="ABQ21539"/>
    </conflict>
</comment>
<comment type="sequence caution" evidence="2">
    <conflict type="erroneous initiation">
        <sequence resource="EMBL-CDS" id="ACP10403"/>
    </conflict>
</comment>
<reference key="1">
    <citation type="submission" date="2007-03" db="EMBL/GenBank/DDBJ databases">
        <authorList>
            <person name="Heidelberg J."/>
        </authorList>
    </citation>
    <scope>NUCLEOTIDE SEQUENCE [LARGE SCALE GENOMIC DNA]</scope>
    <source>
        <strain>ATCC 39541 / Classical Ogawa 395 / O395</strain>
    </source>
</reference>
<reference key="2">
    <citation type="journal article" date="2008" name="PLoS ONE">
        <title>A recalibrated molecular clock and independent origins for the cholera pandemic clones.</title>
        <authorList>
            <person name="Feng L."/>
            <person name="Reeves P.R."/>
            <person name="Lan R."/>
            <person name="Ren Y."/>
            <person name="Gao C."/>
            <person name="Zhou Z."/>
            <person name="Ren Y."/>
            <person name="Cheng J."/>
            <person name="Wang W."/>
            <person name="Wang J."/>
            <person name="Qian W."/>
            <person name="Li D."/>
            <person name="Wang L."/>
        </authorList>
    </citation>
    <scope>NUCLEOTIDE SEQUENCE [LARGE SCALE GENOMIC DNA]</scope>
    <source>
        <strain>ATCC 39541 / Classical Ogawa 395 / O395</strain>
    </source>
</reference>
<keyword id="KW-0963">Cytoplasm</keyword>
<keyword id="KW-0489">Methyltransferase</keyword>
<keyword id="KW-0698">rRNA processing</keyword>
<keyword id="KW-0949">S-adenosyl-L-methionine</keyword>
<keyword id="KW-0808">Transferase</keyword>